<accession>Q5QZP1</accession>
<sequence length="318" mass="35159">MSLNFLDFEQPIAELEAQIEELKSVGNRGQLDLNLEEEVQRLTTKSQELTEKIFSDLGAWQVAQLARHPLRPYTLDYIRMIFTEFDEMAGDRSFANDEAIVGGIARLDGTPVMVIGQQKGRETKEKIRRNFGMPKPEGYRKALRLMQTAERFKMPIVTFIDTPGAYPGIGAEERGQSEAIARNLKVMARLTVPIVCTVIGEGGSGGALAIGVGDRVNMLQYSTYSVISPEGCASILWKSASKAPLAAEAMGVTAERSKELGLVDSVIPEPLGGAHRHQEEMAVRLKRQLIADLGSLQGLSHEELLDQRYRKLMSFGYC</sequence>
<comment type="function">
    <text evidence="1">Component of the acetyl coenzyme A carboxylase (ACC) complex. First, biotin carboxylase catalyzes the carboxylation of biotin on its carrier protein (BCCP) and then the CO(2) group is transferred by the carboxyltransferase to acetyl-CoA to form malonyl-CoA.</text>
</comment>
<comment type="catalytic activity">
    <reaction evidence="1">
        <text>N(6)-carboxybiotinyl-L-lysyl-[protein] + acetyl-CoA = N(6)-biotinyl-L-lysyl-[protein] + malonyl-CoA</text>
        <dbReference type="Rhea" id="RHEA:54728"/>
        <dbReference type="Rhea" id="RHEA-COMP:10505"/>
        <dbReference type="Rhea" id="RHEA-COMP:10506"/>
        <dbReference type="ChEBI" id="CHEBI:57288"/>
        <dbReference type="ChEBI" id="CHEBI:57384"/>
        <dbReference type="ChEBI" id="CHEBI:83144"/>
        <dbReference type="ChEBI" id="CHEBI:83145"/>
        <dbReference type="EC" id="2.1.3.15"/>
    </reaction>
</comment>
<comment type="pathway">
    <text evidence="1">Lipid metabolism; malonyl-CoA biosynthesis; malonyl-CoA from acetyl-CoA: step 1/1.</text>
</comment>
<comment type="subunit">
    <text evidence="1">Acetyl-CoA carboxylase is a heterohexamer composed of biotin carboxyl carrier protein (AccB), biotin carboxylase (AccC) and two subunits each of ACCase subunit alpha (AccA) and ACCase subunit beta (AccD).</text>
</comment>
<comment type="subcellular location">
    <subcellularLocation>
        <location evidence="1">Cytoplasm</location>
    </subcellularLocation>
</comment>
<comment type="similarity">
    <text evidence="1">Belongs to the AccA family.</text>
</comment>
<dbReference type="EC" id="2.1.3.15" evidence="1"/>
<dbReference type="EMBL" id="AE017340">
    <property type="protein sequence ID" value="AAV82521.1"/>
    <property type="molecule type" value="Genomic_DNA"/>
</dbReference>
<dbReference type="RefSeq" id="WP_011234924.1">
    <property type="nucleotide sequence ID" value="NC_006512.1"/>
</dbReference>
<dbReference type="SMR" id="Q5QZP1"/>
<dbReference type="STRING" id="283942.IL1688"/>
<dbReference type="GeneID" id="41336861"/>
<dbReference type="KEGG" id="ilo:IL1688"/>
<dbReference type="eggNOG" id="COG0825">
    <property type="taxonomic scope" value="Bacteria"/>
</dbReference>
<dbReference type="HOGENOM" id="CLU_015486_0_2_6"/>
<dbReference type="OrthoDB" id="9808023at2"/>
<dbReference type="UniPathway" id="UPA00655">
    <property type="reaction ID" value="UER00711"/>
</dbReference>
<dbReference type="Proteomes" id="UP000001171">
    <property type="component" value="Chromosome"/>
</dbReference>
<dbReference type="GO" id="GO:0009317">
    <property type="term" value="C:acetyl-CoA carboxylase complex"/>
    <property type="evidence" value="ECO:0007669"/>
    <property type="project" value="InterPro"/>
</dbReference>
<dbReference type="GO" id="GO:0003989">
    <property type="term" value="F:acetyl-CoA carboxylase activity"/>
    <property type="evidence" value="ECO:0007669"/>
    <property type="project" value="InterPro"/>
</dbReference>
<dbReference type="GO" id="GO:0005524">
    <property type="term" value="F:ATP binding"/>
    <property type="evidence" value="ECO:0007669"/>
    <property type="project" value="UniProtKB-KW"/>
</dbReference>
<dbReference type="GO" id="GO:0016743">
    <property type="term" value="F:carboxyl- or carbamoyltransferase activity"/>
    <property type="evidence" value="ECO:0007669"/>
    <property type="project" value="UniProtKB-UniRule"/>
</dbReference>
<dbReference type="GO" id="GO:0006633">
    <property type="term" value="P:fatty acid biosynthetic process"/>
    <property type="evidence" value="ECO:0007669"/>
    <property type="project" value="UniProtKB-KW"/>
</dbReference>
<dbReference type="GO" id="GO:2001295">
    <property type="term" value="P:malonyl-CoA biosynthetic process"/>
    <property type="evidence" value="ECO:0007669"/>
    <property type="project" value="UniProtKB-UniRule"/>
</dbReference>
<dbReference type="FunFam" id="3.90.226.10:FF:000008">
    <property type="entry name" value="Acetyl-coenzyme A carboxylase carboxyl transferase subunit alpha"/>
    <property type="match status" value="1"/>
</dbReference>
<dbReference type="Gene3D" id="3.90.226.10">
    <property type="entry name" value="2-enoyl-CoA Hydratase, Chain A, domain 1"/>
    <property type="match status" value="1"/>
</dbReference>
<dbReference type="HAMAP" id="MF_00823">
    <property type="entry name" value="AcetylCoA_CT_alpha"/>
    <property type="match status" value="1"/>
</dbReference>
<dbReference type="InterPro" id="IPR001095">
    <property type="entry name" value="Acetyl_CoA_COase_a_su"/>
</dbReference>
<dbReference type="InterPro" id="IPR029045">
    <property type="entry name" value="ClpP/crotonase-like_dom_sf"/>
</dbReference>
<dbReference type="InterPro" id="IPR011763">
    <property type="entry name" value="COA_CT_C"/>
</dbReference>
<dbReference type="NCBIfam" id="TIGR00513">
    <property type="entry name" value="accA"/>
    <property type="match status" value="1"/>
</dbReference>
<dbReference type="NCBIfam" id="NF041504">
    <property type="entry name" value="AccA_sub"/>
    <property type="match status" value="1"/>
</dbReference>
<dbReference type="NCBIfam" id="NF004344">
    <property type="entry name" value="PRK05724.1"/>
    <property type="match status" value="1"/>
</dbReference>
<dbReference type="PANTHER" id="PTHR42853">
    <property type="entry name" value="ACETYL-COENZYME A CARBOXYLASE CARBOXYL TRANSFERASE SUBUNIT ALPHA"/>
    <property type="match status" value="1"/>
</dbReference>
<dbReference type="PANTHER" id="PTHR42853:SF3">
    <property type="entry name" value="ACETYL-COENZYME A CARBOXYLASE CARBOXYL TRANSFERASE SUBUNIT ALPHA, CHLOROPLASTIC"/>
    <property type="match status" value="1"/>
</dbReference>
<dbReference type="Pfam" id="PF03255">
    <property type="entry name" value="ACCA"/>
    <property type="match status" value="1"/>
</dbReference>
<dbReference type="PRINTS" id="PR01069">
    <property type="entry name" value="ACCCTRFRASEA"/>
</dbReference>
<dbReference type="SUPFAM" id="SSF52096">
    <property type="entry name" value="ClpP/crotonase"/>
    <property type="match status" value="1"/>
</dbReference>
<dbReference type="PROSITE" id="PS50989">
    <property type="entry name" value="COA_CT_CTER"/>
    <property type="match status" value="1"/>
</dbReference>
<reference key="1">
    <citation type="journal article" date="2004" name="Proc. Natl. Acad. Sci. U.S.A.">
        <title>Genome sequence of the deep-sea gamma-proteobacterium Idiomarina loihiensis reveals amino acid fermentation as a source of carbon and energy.</title>
        <authorList>
            <person name="Hou S."/>
            <person name="Saw J.H."/>
            <person name="Lee K.S."/>
            <person name="Freitas T.A."/>
            <person name="Belisle C."/>
            <person name="Kawarabayasi Y."/>
            <person name="Donachie S.P."/>
            <person name="Pikina A."/>
            <person name="Galperin M.Y."/>
            <person name="Koonin E.V."/>
            <person name="Makarova K.S."/>
            <person name="Omelchenko M.V."/>
            <person name="Sorokin A."/>
            <person name="Wolf Y.I."/>
            <person name="Li Q.X."/>
            <person name="Keum Y.S."/>
            <person name="Campbell S."/>
            <person name="Denery J."/>
            <person name="Aizawa S."/>
            <person name="Shibata S."/>
            <person name="Malahoff A."/>
            <person name="Alam M."/>
        </authorList>
    </citation>
    <scope>NUCLEOTIDE SEQUENCE [LARGE SCALE GENOMIC DNA]</scope>
    <source>
        <strain>ATCC BAA-735 / DSM 15497 / L2-TR</strain>
    </source>
</reference>
<name>ACCA_IDILO</name>
<proteinExistence type="inferred from homology"/>
<feature type="chain" id="PRO_0000223778" description="Acetyl-coenzyme A carboxylase carboxyl transferase subunit alpha">
    <location>
        <begin position="1"/>
        <end position="318"/>
    </location>
</feature>
<feature type="domain" description="CoA carboxyltransferase C-terminal" evidence="2">
    <location>
        <begin position="41"/>
        <end position="295"/>
    </location>
</feature>
<protein>
    <recommendedName>
        <fullName evidence="1">Acetyl-coenzyme A carboxylase carboxyl transferase subunit alpha</fullName>
        <shortName evidence="1">ACCase subunit alpha</shortName>
        <shortName evidence="1">Acetyl-CoA carboxylase carboxyltransferase subunit alpha</shortName>
        <ecNumber evidence="1">2.1.3.15</ecNumber>
    </recommendedName>
</protein>
<evidence type="ECO:0000255" key="1">
    <source>
        <dbReference type="HAMAP-Rule" id="MF_00823"/>
    </source>
</evidence>
<evidence type="ECO:0000255" key="2">
    <source>
        <dbReference type="PROSITE-ProRule" id="PRU01137"/>
    </source>
</evidence>
<gene>
    <name evidence="1" type="primary">accA</name>
    <name type="ordered locus">IL1688</name>
</gene>
<organism>
    <name type="scientific">Idiomarina loihiensis (strain ATCC BAA-735 / DSM 15497 / L2-TR)</name>
    <dbReference type="NCBI Taxonomy" id="283942"/>
    <lineage>
        <taxon>Bacteria</taxon>
        <taxon>Pseudomonadati</taxon>
        <taxon>Pseudomonadota</taxon>
        <taxon>Gammaproteobacteria</taxon>
        <taxon>Alteromonadales</taxon>
        <taxon>Idiomarinaceae</taxon>
        <taxon>Idiomarina</taxon>
    </lineage>
</organism>
<keyword id="KW-0067">ATP-binding</keyword>
<keyword id="KW-0963">Cytoplasm</keyword>
<keyword id="KW-0275">Fatty acid biosynthesis</keyword>
<keyword id="KW-0276">Fatty acid metabolism</keyword>
<keyword id="KW-0444">Lipid biosynthesis</keyword>
<keyword id="KW-0443">Lipid metabolism</keyword>
<keyword id="KW-0547">Nucleotide-binding</keyword>
<keyword id="KW-1185">Reference proteome</keyword>
<keyword id="KW-0808">Transferase</keyword>